<feature type="chain" id="PRO_1000134203" description="ATP synthase gamma chain">
    <location>
        <begin position="1"/>
        <end position="287"/>
    </location>
</feature>
<reference key="1">
    <citation type="journal article" date="2011" name="J. Bacteriol.">
        <title>Comparative genomics of 28 Salmonella enterica isolates: evidence for CRISPR-mediated adaptive sublineage evolution.</title>
        <authorList>
            <person name="Fricke W.F."/>
            <person name="Mammel M.K."/>
            <person name="McDermott P.F."/>
            <person name="Tartera C."/>
            <person name="White D.G."/>
            <person name="Leclerc J.E."/>
            <person name="Ravel J."/>
            <person name="Cebula T.A."/>
        </authorList>
    </citation>
    <scope>NUCLEOTIDE SEQUENCE [LARGE SCALE GENOMIC DNA]</scope>
    <source>
        <strain>SL254</strain>
    </source>
</reference>
<sequence length="287" mass="31555">MAGAKEIRSKIASVQNTQKITKAMEMVAASKMRKSQDRMAASRPYAETMRKVIGHLANGNLEYKHPYLEERDVKRVGYLVVSTDRGLCGGLNINLFKKLLADMKAWSDKGVQCELAMIGSKGVSFFNSVGGNVVAQVTGMGDNPSLSELIGPVKVMLQAYDEGRLDKLYIVSNKFINTMSQVPTITQLLPLPASEDDDLKRKAWDYLYEPDPKALLDTLLRRYVESQVYQGVVENLASEQAARMVAMKAATDNGGSLIKELQLVYNKARQASITQELTEIVSGAAAV</sequence>
<proteinExistence type="inferred from homology"/>
<evidence type="ECO:0000255" key="1">
    <source>
        <dbReference type="HAMAP-Rule" id="MF_00815"/>
    </source>
</evidence>
<organism>
    <name type="scientific">Salmonella newport (strain SL254)</name>
    <dbReference type="NCBI Taxonomy" id="423368"/>
    <lineage>
        <taxon>Bacteria</taxon>
        <taxon>Pseudomonadati</taxon>
        <taxon>Pseudomonadota</taxon>
        <taxon>Gammaproteobacteria</taxon>
        <taxon>Enterobacterales</taxon>
        <taxon>Enterobacteriaceae</taxon>
        <taxon>Salmonella</taxon>
    </lineage>
</organism>
<gene>
    <name evidence="1" type="primary">atpG</name>
    <name type="ordered locus">SNSL254_A4147</name>
</gene>
<name>ATPG_SALNS</name>
<dbReference type="EMBL" id="CP001113">
    <property type="protein sequence ID" value="ACF65700.1"/>
    <property type="molecule type" value="Genomic_DNA"/>
</dbReference>
<dbReference type="RefSeq" id="WP_000896506.1">
    <property type="nucleotide sequence ID" value="NZ_CCMR01000001.1"/>
</dbReference>
<dbReference type="SMR" id="B4SYD2"/>
<dbReference type="GeneID" id="66758155"/>
<dbReference type="KEGG" id="see:SNSL254_A4147"/>
<dbReference type="HOGENOM" id="CLU_050669_0_1_6"/>
<dbReference type="Proteomes" id="UP000008824">
    <property type="component" value="Chromosome"/>
</dbReference>
<dbReference type="GO" id="GO:0005886">
    <property type="term" value="C:plasma membrane"/>
    <property type="evidence" value="ECO:0007669"/>
    <property type="project" value="UniProtKB-SubCell"/>
</dbReference>
<dbReference type="GO" id="GO:0045259">
    <property type="term" value="C:proton-transporting ATP synthase complex"/>
    <property type="evidence" value="ECO:0007669"/>
    <property type="project" value="UniProtKB-KW"/>
</dbReference>
<dbReference type="GO" id="GO:0005524">
    <property type="term" value="F:ATP binding"/>
    <property type="evidence" value="ECO:0007669"/>
    <property type="project" value="UniProtKB-UniRule"/>
</dbReference>
<dbReference type="GO" id="GO:0046933">
    <property type="term" value="F:proton-transporting ATP synthase activity, rotational mechanism"/>
    <property type="evidence" value="ECO:0007669"/>
    <property type="project" value="UniProtKB-UniRule"/>
</dbReference>
<dbReference type="GO" id="GO:0042777">
    <property type="term" value="P:proton motive force-driven plasma membrane ATP synthesis"/>
    <property type="evidence" value="ECO:0007669"/>
    <property type="project" value="UniProtKB-UniRule"/>
</dbReference>
<dbReference type="CDD" id="cd12151">
    <property type="entry name" value="F1-ATPase_gamma"/>
    <property type="match status" value="1"/>
</dbReference>
<dbReference type="FunFam" id="1.10.287.80:FF:000005">
    <property type="entry name" value="ATP synthase gamma chain"/>
    <property type="match status" value="2"/>
</dbReference>
<dbReference type="FunFam" id="3.40.1380.10:FF:000001">
    <property type="entry name" value="ATP synthase gamma chain"/>
    <property type="match status" value="1"/>
</dbReference>
<dbReference type="Gene3D" id="3.40.1380.10">
    <property type="match status" value="1"/>
</dbReference>
<dbReference type="Gene3D" id="1.10.287.80">
    <property type="entry name" value="ATP synthase, gamma subunit, helix hairpin domain"/>
    <property type="match status" value="1"/>
</dbReference>
<dbReference type="HAMAP" id="MF_00815">
    <property type="entry name" value="ATP_synth_gamma_bact"/>
    <property type="match status" value="1"/>
</dbReference>
<dbReference type="InterPro" id="IPR035968">
    <property type="entry name" value="ATP_synth_F1_ATPase_gsu"/>
</dbReference>
<dbReference type="InterPro" id="IPR000131">
    <property type="entry name" value="ATP_synth_F1_gsu"/>
</dbReference>
<dbReference type="InterPro" id="IPR023632">
    <property type="entry name" value="ATP_synth_F1_gsu_CS"/>
</dbReference>
<dbReference type="NCBIfam" id="TIGR01146">
    <property type="entry name" value="ATPsyn_F1gamma"/>
    <property type="match status" value="1"/>
</dbReference>
<dbReference type="NCBIfam" id="NF004144">
    <property type="entry name" value="PRK05621.1-1"/>
    <property type="match status" value="1"/>
</dbReference>
<dbReference type="PANTHER" id="PTHR11693">
    <property type="entry name" value="ATP SYNTHASE GAMMA CHAIN"/>
    <property type="match status" value="1"/>
</dbReference>
<dbReference type="PANTHER" id="PTHR11693:SF22">
    <property type="entry name" value="ATP SYNTHASE SUBUNIT GAMMA, MITOCHONDRIAL"/>
    <property type="match status" value="1"/>
</dbReference>
<dbReference type="Pfam" id="PF00231">
    <property type="entry name" value="ATP-synt"/>
    <property type="match status" value="1"/>
</dbReference>
<dbReference type="PRINTS" id="PR00126">
    <property type="entry name" value="ATPASEGAMMA"/>
</dbReference>
<dbReference type="SUPFAM" id="SSF52943">
    <property type="entry name" value="ATP synthase (F1-ATPase), gamma subunit"/>
    <property type="match status" value="1"/>
</dbReference>
<dbReference type="PROSITE" id="PS00153">
    <property type="entry name" value="ATPASE_GAMMA"/>
    <property type="match status" value="1"/>
</dbReference>
<keyword id="KW-0066">ATP synthesis</keyword>
<keyword id="KW-0997">Cell inner membrane</keyword>
<keyword id="KW-1003">Cell membrane</keyword>
<keyword id="KW-0139">CF(1)</keyword>
<keyword id="KW-0375">Hydrogen ion transport</keyword>
<keyword id="KW-0406">Ion transport</keyword>
<keyword id="KW-0472">Membrane</keyword>
<keyword id="KW-0813">Transport</keyword>
<comment type="function">
    <text evidence="1">Produces ATP from ADP in the presence of a proton gradient across the membrane. The gamma chain is believed to be important in regulating ATPase activity and the flow of protons through the CF(0) complex.</text>
</comment>
<comment type="subunit">
    <text evidence="1">F-type ATPases have 2 components, CF(1) - the catalytic core - and CF(0) - the membrane proton channel. CF(1) has five subunits: alpha(3), beta(3), gamma(1), delta(1), epsilon(1). CF(0) has three main subunits: a, b and c.</text>
</comment>
<comment type="subcellular location">
    <subcellularLocation>
        <location evidence="1">Cell inner membrane</location>
        <topology evidence="1">Peripheral membrane protein</topology>
    </subcellularLocation>
</comment>
<comment type="similarity">
    <text evidence="1">Belongs to the ATPase gamma chain family.</text>
</comment>
<accession>B4SYD2</accession>
<protein>
    <recommendedName>
        <fullName evidence="1">ATP synthase gamma chain</fullName>
    </recommendedName>
    <alternativeName>
        <fullName evidence="1">ATP synthase F1 sector gamma subunit</fullName>
    </alternativeName>
    <alternativeName>
        <fullName evidence="1">F-ATPase gamma subunit</fullName>
    </alternativeName>
</protein>